<reference key="1">
    <citation type="journal article" date="2000" name="DNA Res.">
        <title>Structural analysis of Arabidopsis thaliana chromosome 3. I. Sequence features of the regions of 4,504,864 bp covered by sixty P1 and TAC clones.</title>
        <authorList>
            <person name="Sato S."/>
            <person name="Nakamura Y."/>
            <person name="Kaneko T."/>
            <person name="Katoh T."/>
            <person name="Asamizu E."/>
            <person name="Tabata S."/>
        </authorList>
    </citation>
    <scope>NUCLEOTIDE SEQUENCE [LARGE SCALE GENOMIC DNA]</scope>
    <source>
        <strain>cv. Columbia</strain>
    </source>
</reference>
<reference key="2">
    <citation type="journal article" date="2017" name="Plant J.">
        <title>Araport11: a complete reannotation of the Arabidopsis thaliana reference genome.</title>
        <authorList>
            <person name="Cheng C.Y."/>
            <person name="Krishnakumar V."/>
            <person name="Chan A.P."/>
            <person name="Thibaud-Nissen F."/>
            <person name="Schobel S."/>
            <person name="Town C.D."/>
        </authorList>
    </citation>
    <scope>GENOME REANNOTATION</scope>
    <source>
        <strain>cv. Columbia</strain>
    </source>
</reference>
<reference key="3">
    <citation type="journal article" date="2001" name="Plant Cell">
        <title>A genome-wide analysis of Arabidopsis Rop-interactive CRIB motif-containing proteins that act as Rop GTPase targets.</title>
        <authorList>
            <person name="Wu G."/>
            <person name="Gu Y."/>
            <person name="Li S."/>
            <person name="Yang Z."/>
        </authorList>
    </citation>
    <scope>FUNCTION</scope>
    <scope>INTERACTION WITH ARAC11/ROP1</scope>
    <scope>SUBCELLULAR LOCATION</scope>
    <scope>TISSUE SPECIFICITY</scope>
    <scope>GENE FAMILY</scope>
    <scope>NOMENCLATURE</scope>
</reference>
<organism>
    <name type="scientific">Arabidopsis thaliana</name>
    <name type="common">Mouse-ear cress</name>
    <dbReference type="NCBI Taxonomy" id="3702"/>
    <lineage>
        <taxon>Eukaryota</taxon>
        <taxon>Viridiplantae</taxon>
        <taxon>Streptophyta</taxon>
        <taxon>Embryophyta</taxon>
        <taxon>Tracheophyta</taxon>
        <taxon>Spermatophyta</taxon>
        <taxon>Magnoliopsida</taxon>
        <taxon>eudicotyledons</taxon>
        <taxon>Gunneridae</taxon>
        <taxon>Pentapetalae</taxon>
        <taxon>rosids</taxon>
        <taxon>malvids</taxon>
        <taxon>Brassicales</taxon>
        <taxon>Brassicaceae</taxon>
        <taxon>Camelineae</taxon>
        <taxon>Arabidopsis</taxon>
    </lineage>
</organism>
<keyword id="KW-1003">Cell membrane</keyword>
<keyword id="KW-0341">Growth regulation</keyword>
<keyword id="KW-0472">Membrane</keyword>
<keyword id="KW-1185">Reference proteome</keyword>
<name>RIC5_ARATH</name>
<sequence length="193" mass="20702">MTSPMKGLLKGLRYIARIFEDEKEPEMQIGIPTDVKHVAHIGWEGPSATTPSWMHDFKPTDQTKTETKGTSNKKPGSSGEKHRKGRRKTSTGNNSPTESPSRVGGSVRPSKRNTGKQREQNTGSGSESGSGLELPQQTDQFVVPKQSKQKKSKGSATGGGEPPPSNEPSNKKETDISVRAVYPCAGLGSSTGR</sequence>
<protein>
    <recommendedName>
        <fullName>CRIB domain-containing protein RIC5</fullName>
    </recommendedName>
    <alternativeName>
        <fullName>ROP-interactive CRIB motif-containing protein 5</fullName>
    </alternativeName>
    <alternativeName>
        <fullName>Target of ROP protein RIC5</fullName>
    </alternativeName>
</protein>
<accession>F4J424</accession>
<accession>Q9LW58</accession>
<comment type="function">
    <text evidence="3">Functions as a downstream effector of Rho-related GTP binding proteins of the 'Rho of Plants' (ROPs) family. Participates in the propagation of ROP GTPase signals in specific cellular responses. Is involved in pollen tube growth regulation through its interaction with ARAC11/ROP1.</text>
</comment>
<comment type="subunit">
    <text evidence="3">Interacts with ARAC11/ROP1.</text>
</comment>
<comment type="subcellular location">
    <subcellularLocation>
        <location evidence="5">Cell membrane</location>
        <topology evidence="5">Peripheral membrane protein</topology>
    </subcellularLocation>
</comment>
<comment type="tissue specificity">
    <text evidence="3">Expressed in flowers and pollen.</text>
</comment>
<comment type="miscellaneous">
    <text evidence="5">Over-expression of RIC5 in tobacco germinating pollen reduces pollen tube expansion elongation.</text>
</comment>
<comment type="sequence caution" evidence="4">
    <conflict type="erroneous gene model prediction">
        <sequence resource="EMBL-CDS" id="BAB02282"/>
    </conflict>
</comment>
<feature type="chain" id="PRO_0000422728" description="CRIB domain-containing protein RIC5">
    <location>
        <begin position="1"/>
        <end position="193"/>
    </location>
</feature>
<feature type="domain" description="CRIB" evidence="1">
    <location>
        <begin position="29"/>
        <end position="42"/>
    </location>
</feature>
<feature type="region of interest" description="Disordered" evidence="2">
    <location>
        <begin position="42"/>
        <end position="193"/>
    </location>
</feature>
<feature type="compositionally biased region" description="Basic and acidic residues" evidence="2">
    <location>
        <begin position="55"/>
        <end position="67"/>
    </location>
</feature>
<feature type="compositionally biased region" description="Polar residues" evidence="2">
    <location>
        <begin position="90"/>
        <end position="100"/>
    </location>
</feature>
<feature type="compositionally biased region" description="Low complexity" evidence="2">
    <location>
        <begin position="123"/>
        <end position="134"/>
    </location>
</feature>
<proteinExistence type="evidence at protein level"/>
<gene>
    <name type="primary">RIC5</name>
    <name type="ordered locus">At3g23380</name>
    <name type="ORF">MLM24.11</name>
</gene>
<evidence type="ECO:0000255" key="1">
    <source>
        <dbReference type="PROSITE-ProRule" id="PRU00057"/>
    </source>
</evidence>
<evidence type="ECO:0000256" key="2">
    <source>
        <dbReference type="SAM" id="MobiDB-lite"/>
    </source>
</evidence>
<evidence type="ECO:0000269" key="3">
    <source>
    </source>
</evidence>
<evidence type="ECO:0000305" key="4"/>
<evidence type="ECO:0000305" key="5">
    <source>
    </source>
</evidence>
<dbReference type="EMBL" id="AB015474">
    <property type="protein sequence ID" value="BAB02282.1"/>
    <property type="status" value="ALT_SEQ"/>
    <property type="molecule type" value="Genomic_DNA"/>
</dbReference>
<dbReference type="EMBL" id="CP002686">
    <property type="protein sequence ID" value="AEE76759.1"/>
    <property type="molecule type" value="Genomic_DNA"/>
</dbReference>
<dbReference type="EMBL" id="CP002686">
    <property type="protein sequence ID" value="ANM64704.1"/>
    <property type="molecule type" value="Genomic_DNA"/>
</dbReference>
<dbReference type="RefSeq" id="NP_001319624.1">
    <property type="nucleotide sequence ID" value="NM_001338629.1"/>
</dbReference>
<dbReference type="RefSeq" id="NP_188980.1">
    <property type="nucleotide sequence ID" value="NM_113241.2"/>
</dbReference>
<dbReference type="BioGRID" id="7251">
    <property type="interactions" value="1"/>
</dbReference>
<dbReference type="FunCoup" id="F4J424">
    <property type="interactions" value="47"/>
</dbReference>
<dbReference type="STRING" id="3702.F4J424"/>
<dbReference type="GlyGen" id="F4J424">
    <property type="glycosylation" value="1 site"/>
</dbReference>
<dbReference type="iPTMnet" id="F4J424"/>
<dbReference type="PaxDb" id="3702-AT3G23380.1"/>
<dbReference type="ProteomicsDB" id="236983"/>
<dbReference type="EnsemblPlants" id="AT3G23380.1">
    <property type="protein sequence ID" value="AT3G23380.1"/>
    <property type="gene ID" value="AT3G23380"/>
</dbReference>
<dbReference type="EnsemblPlants" id="AT3G23380.2">
    <property type="protein sequence ID" value="AT3G23380.2"/>
    <property type="gene ID" value="AT3G23380"/>
</dbReference>
<dbReference type="GeneID" id="821919"/>
<dbReference type="Gramene" id="AT3G23380.1">
    <property type="protein sequence ID" value="AT3G23380.1"/>
    <property type="gene ID" value="AT3G23380"/>
</dbReference>
<dbReference type="Gramene" id="AT3G23380.2">
    <property type="protein sequence ID" value="AT3G23380.2"/>
    <property type="gene ID" value="AT3G23380"/>
</dbReference>
<dbReference type="KEGG" id="ath:AT3G23380"/>
<dbReference type="Araport" id="AT3G23380"/>
<dbReference type="TAIR" id="AT3G23380">
    <property type="gene designation" value="RIC5"/>
</dbReference>
<dbReference type="eggNOG" id="ENOG502S3JH">
    <property type="taxonomic scope" value="Eukaryota"/>
</dbReference>
<dbReference type="HOGENOM" id="CLU_1613117_0_0_1"/>
<dbReference type="InParanoid" id="F4J424"/>
<dbReference type="OMA" id="HEYKSPV"/>
<dbReference type="PRO" id="PR:F4J424"/>
<dbReference type="Proteomes" id="UP000006548">
    <property type="component" value="Chromosome 3"/>
</dbReference>
<dbReference type="ExpressionAtlas" id="F4J424">
    <property type="expression patterns" value="baseline"/>
</dbReference>
<dbReference type="GO" id="GO:0016324">
    <property type="term" value="C:apical plasma membrane"/>
    <property type="evidence" value="ECO:0000314"/>
    <property type="project" value="TAIR"/>
</dbReference>
<dbReference type="GO" id="GO:0009860">
    <property type="term" value="P:pollen tube growth"/>
    <property type="evidence" value="ECO:0000315"/>
    <property type="project" value="TAIR"/>
</dbReference>
<dbReference type="CDD" id="cd00132">
    <property type="entry name" value="CRIB"/>
    <property type="match status" value="1"/>
</dbReference>
<dbReference type="InterPro" id="IPR000095">
    <property type="entry name" value="CRIB_dom"/>
</dbReference>
<dbReference type="PANTHER" id="PTHR46325:SF14">
    <property type="entry name" value="CRIB DOMAIN-CONTAINING PROTEIN RIC5"/>
    <property type="match status" value="1"/>
</dbReference>
<dbReference type="PANTHER" id="PTHR46325">
    <property type="entry name" value="CRIB DOMAIN-CONTAINING PROTEIN RIC8"/>
    <property type="match status" value="1"/>
</dbReference>
<dbReference type="Pfam" id="PF00786">
    <property type="entry name" value="PBD"/>
    <property type="match status" value="1"/>
</dbReference>
<dbReference type="SMART" id="SM00285">
    <property type="entry name" value="PBD"/>
    <property type="match status" value="1"/>
</dbReference>
<dbReference type="PROSITE" id="PS50108">
    <property type="entry name" value="CRIB"/>
    <property type="match status" value="1"/>
</dbReference>